<evidence type="ECO:0000250" key="1"/>
<evidence type="ECO:0000305" key="2"/>
<reference key="1">
    <citation type="journal article" date="2002" name="Genome Res.">
        <title>The genome of Methanosarcina acetivorans reveals extensive metabolic and physiological diversity.</title>
        <authorList>
            <person name="Galagan J.E."/>
            <person name="Nusbaum C."/>
            <person name="Roy A."/>
            <person name="Endrizzi M.G."/>
            <person name="Macdonald P."/>
            <person name="FitzHugh W."/>
            <person name="Calvo S."/>
            <person name="Engels R."/>
            <person name="Smirnov S."/>
            <person name="Atnoor D."/>
            <person name="Brown A."/>
            <person name="Allen N."/>
            <person name="Naylor J."/>
            <person name="Stange-Thomann N."/>
            <person name="DeArellano K."/>
            <person name="Johnson R."/>
            <person name="Linton L."/>
            <person name="McEwan P."/>
            <person name="McKernan K."/>
            <person name="Talamas J."/>
            <person name="Tirrell A."/>
            <person name="Ye W."/>
            <person name="Zimmer A."/>
            <person name="Barber R.D."/>
            <person name="Cann I."/>
            <person name="Graham D.E."/>
            <person name="Grahame D.A."/>
            <person name="Guss A.M."/>
            <person name="Hedderich R."/>
            <person name="Ingram-Smith C."/>
            <person name="Kuettner H.C."/>
            <person name="Krzycki J.A."/>
            <person name="Leigh J.A."/>
            <person name="Li W."/>
            <person name="Liu J."/>
            <person name="Mukhopadhyay B."/>
            <person name="Reeve J.N."/>
            <person name="Smith K."/>
            <person name="Springer T.A."/>
            <person name="Umayam L.A."/>
            <person name="White O."/>
            <person name="White R.H."/>
            <person name="de Macario E.C."/>
            <person name="Ferry J.G."/>
            <person name="Jarrell K.F."/>
            <person name="Jing H."/>
            <person name="Macario A.J.L."/>
            <person name="Paulsen I.T."/>
            <person name="Pritchett M."/>
            <person name="Sowers K.R."/>
            <person name="Swanson R.V."/>
            <person name="Zinder S.H."/>
            <person name="Lander E."/>
            <person name="Metcalf W.W."/>
            <person name="Birren B."/>
        </authorList>
    </citation>
    <scope>NUCLEOTIDE SEQUENCE [LARGE SCALE GENOMIC DNA]</scope>
    <source>
        <strain>ATCC 35395 / DSM 2834 / JCM 12185 / C2A</strain>
    </source>
</reference>
<name>DHYS1_METAC</name>
<sequence length="317" mass="34596">MDFEASARDLTTPVKGAKIVPNMSVDELVREYAGCAFGAGRLAEAVDIYYEMLASEKTTKFFGLAGAMTPAGMRGIIADLIRDGHIDVLVTTGANMVHDTVEALGLHHYKGSDCANDIQLRHECIDRIYDVYLPDQHFTDLEEFLQSVYAGLPQEKLSIRQVLTEIGKNLDDDSSILKTAAEMGVPVYCPALQDSVIGLQAWLYKEGNLLHVDAFADMHEFMEICYEAESAGAMLLGGGVPKNYILQSMLVTPKSFDYAIQLTMDRPETGGLSGATLDEAQSWGKVGEDAKSVTVYADATITLPLIVSAVRTRLSKR</sequence>
<keyword id="KW-0386">Hypusine biosynthesis</keyword>
<keyword id="KW-0520">NAD</keyword>
<keyword id="KW-1185">Reference proteome</keyword>
<keyword id="KW-0808">Transferase</keyword>
<gene>
    <name type="primary">dys1</name>
    <name type="ordered locus">MA_0968</name>
</gene>
<comment type="function">
    <text evidence="1">Catalyzes the NAD-dependent oxidative cleavage of spermidine and the subsequent transfer of the butylamine moiety of spermidine to the epsilon-amino group of a specific lysine residue of the eIF-5A precursor protein to form the intermediate deoxyhypusine residue.</text>
</comment>
<comment type="catalytic activity">
    <reaction>
        <text>[eIF5A protein]-L-lysine + spermidine = [eIF5A protein]-deoxyhypusine + propane-1,3-diamine</text>
        <dbReference type="Rhea" id="RHEA:33299"/>
        <dbReference type="Rhea" id="RHEA-COMP:10143"/>
        <dbReference type="Rhea" id="RHEA-COMP:10144"/>
        <dbReference type="ChEBI" id="CHEBI:29969"/>
        <dbReference type="ChEBI" id="CHEBI:57484"/>
        <dbReference type="ChEBI" id="CHEBI:57834"/>
        <dbReference type="ChEBI" id="CHEBI:82657"/>
        <dbReference type="EC" id="2.5.1.46"/>
    </reaction>
</comment>
<comment type="cofactor">
    <cofactor evidence="1">
        <name>NAD(+)</name>
        <dbReference type="ChEBI" id="CHEBI:57540"/>
    </cofactor>
</comment>
<comment type="pathway">
    <text>Protein modification; eIF5A hypusination.</text>
</comment>
<comment type="similarity">
    <text evidence="2">Belongs to the deoxyhypusine synthase family.</text>
</comment>
<protein>
    <recommendedName>
        <fullName>Probable deoxyhypusine synthase 1</fullName>
        <shortName>DHS 1</shortName>
        <ecNumber>2.5.1.46</ecNumber>
    </recommendedName>
</protein>
<proteinExistence type="inferred from homology"/>
<accession>Q8TS38</accession>
<feature type="chain" id="PRO_0000134493" description="Probable deoxyhypusine synthase 1">
    <location>
        <begin position="1"/>
        <end position="317"/>
    </location>
</feature>
<feature type="active site" description="Nucleophile" evidence="1">
    <location>
        <position position="285"/>
    </location>
</feature>
<dbReference type="EC" id="2.5.1.46"/>
<dbReference type="EMBL" id="AE010299">
    <property type="protein sequence ID" value="AAM04400.1"/>
    <property type="molecule type" value="Genomic_DNA"/>
</dbReference>
<dbReference type="RefSeq" id="WP_011021005.1">
    <property type="nucleotide sequence ID" value="NC_003552.1"/>
</dbReference>
<dbReference type="SMR" id="Q8TS38"/>
<dbReference type="FunCoup" id="Q8TS38">
    <property type="interactions" value="179"/>
</dbReference>
<dbReference type="STRING" id="188937.MA_0968"/>
<dbReference type="EnsemblBacteria" id="AAM04400">
    <property type="protein sequence ID" value="AAM04400"/>
    <property type="gene ID" value="MA_0968"/>
</dbReference>
<dbReference type="GeneID" id="1472858"/>
<dbReference type="KEGG" id="mac:MA_0968"/>
<dbReference type="HOGENOM" id="CLU_039781_1_0_2"/>
<dbReference type="InParanoid" id="Q8TS38"/>
<dbReference type="OrthoDB" id="17730at2157"/>
<dbReference type="PhylomeDB" id="Q8TS38"/>
<dbReference type="UniPathway" id="UPA00354"/>
<dbReference type="Proteomes" id="UP000002487">
    <property type="component" value="Chromosome"/>
</dbReference>
<dbReference type="GO" id="GO:0005737">
    <property type="term" value="C:cytoplasm"/>
    <property type="evidence" value="ECO:0000318"/>
    <property type="project" value="GO_Central"/>
</dbReference>
<dbReference type="GO" id="GO:0034038">
    <property type="term" value="F:deoxyhypusine synthase activity"/>
    <property type="evidence" value="ECO:0000318"/>
    <property type="project" value="GO_Central"/>
</dbReference>
<dbReference type="GO" id="GO:0008216">
    <property type="term" value="P:spermidine metabolic process"/>
    <property type="evidence" value="ECO:0000318"/>
    <property type="project" value="GO_Central"/>
</dbReference>
<dbReference type="FunFam" id="3.40.910.10:FF:000012">
    <property type="entry name" value="Probable deoxyhypusine synthase"/>
    <property type="match status" value="1"/>
</dbReference>
<dbReference type="Gene3D" id="3.40.910.10">
    <property type="entry name" value="Deoxyhypusine synthase"/>
    <property type="match status" value="1"/>
</dbReference>
<dbReference type="HAMAP" id="MF_00153">
    <property type="entry name" value="DHS"/>
    <property type="match status" value="1"/>
</dbReference>
<dbReference type="InterPro" id="IPR022899">
    <property type="entry name" value="Deoxyhypus_synthase_arc"/>
</dbReference>
<dbReference type="InterPro" id="IPR002773">
    <property type="entry name" value="Deoxyhypusine_synthase"/>
</dbReference>
<dbReference type="InterPro" id="IPR036982">
    <property type="entry name" value="Deoxyhypusine_synthase_sf"/>
</dbReference>
<dbReference type="InterPro" id="IPR029035">
    <property type="entry name" value="DHS-like_NAD/FAD-binding_dom"/>
</dbReference>
<dbReference type="NCBIfam" id="TIGR00321">
    <property type="entry name" value="dhys"/>
    <property type="match status" value="1"/>
</dbReference>
<dbReference type="NCBIfam" id="NF002630">
    <property type="entry name" value="PRK02301.1"/>
    <property type="match status" value="1"/>
</dbReference>
<dbReference type="PANTHER" id="PTHR11703">
    <property type="entry name" value="DEOXYHYPUSINE SYNTHASE"/>
    <property type="match status" value="1"/>
</dbReference>
<dbReference type="PANTHER" id="PTHR11703:SF2">
    <property type="entry name" value="DEOXYHYPUSINE SYNTHASE-LIKE PROTEIN"/>
    <property type="match status" value="1"/>
</dbReference>
<dbReference type="Pfam" id="PF01916">
    <property type="entry name" value="DS"/>
    <property type="match status" value="1"/>
</dbReference>
<dbReference type="SUPFAM" id="SSF52467">
    <property type="entry name" value="DHS-like NAD/FAD-binding domain"/>
    <property type="match status" value="1"/>
</dbReference>
<organism>
    <name type="scientific">Methanosarcina acetivorans (strain ATCC 35395 / DSM 2834 / JCM 12185 / C2A)</name>
    <dbReference type="NCBI Taxonomy" id="188937"/>
    <lineage>
        <taxon>Archaea</taxon>
        <taxon>Methanobacteriati</taxon>
        <taxon>Methanobacteriota</taxon>
        <taxon>Stenosarchaea group</taxon>
        <taxon>Methanomicrobia</taxon>
        <taxon>Methanosarcinales</taxon>
        <taxon>Methanosarcinaceae</taxon>
        <taxon>Methanosarcina</taxon>
    </lineage>
</organism>